<protein>
    <recommendedName>
        <fullName>Homeobox protein Dlx1a</fullName>
        <shortName>DLX-1</shortName>
    </recommendedName>
    <alternativeName>
        <fullName>Distal-less homeobox gene 1a</fullName>
    </alternativeName>
</protein>
<organism>
    <name type="scientific">Danio rerio</name>
    <name type="common">Zebrafish</name>
    <name type="synonym">Brachydanio rerio</name>
    <dbReference type="NCBI Taxonomy" id="7955"/>
    <lineage>
        <taxon>Eukaryota</taxon>
        <taxon>Metazoa</taxon>
        <taxon>Chordata</taxon>
        <taxon>Craniata</taxon>
        <taxon>Vertebrata</taxon>
        <taxon>Euteleostomi</taxon>
        <taxon>Actinopterygii</taxon>
        <taxon>Neopterygii</taxon>
        <taxon>Teleostei</taxon>
        <taxon>Ostariophysi</taxon>
        <taxon>Cypriniformes</taxon>
        <taxon>Danionidae</taxon>
        <taxon>Danioninae</taxon>
        <taxon>Danio</taxon>
    </lineage>
</organism>
<comment type="subcellular location">
    <subcellularLocation>
        <location evidence="1">Nucleus</location>
    </subcellularLocation>
</comment>
<comment type="similarity">
    <text evidence="2">Belongs to the distal-less homeobox family.</text>
</comment>
<sequence length="252" mass="27686">MTMSTIPESLNSPVSGKSVFMEFGPPSQQMSPSSMTHGHYSMHCLHSSGHPQHDSAYSPAPSFPRSLPYPYVNSVGSHSSSPYLSTVQTYPNNSALAQTRLEDPAPESEKNTVVEGGEVRFNGKGKKIRKPRTIYSSLQLQALNRRFQQTQYLALPERAELAASLGLTQTQVKIWFQNKRSKFKKLMKQGGGTIDTNALANGRGLSTGSPSVAPVWNTTATVKTSTPTSYIPSYTSWYPTAHQDTMQQPQLM</sequence>
<dbReference type="EMBL" id="U67842">
    <property type="protein sequence ID" value="AAC60025.1"/>
    <property type="molecule type" value="mRNA"/>
</dbReference>
<dbReference type="EMBL" id="BC093139">
    <property type="protein sequence ID" value="AAH93139.1"/>
    <property type="molecule type" value="mRNA"/>
</dbReference>
<dbReference type="RefSeq" id="NP_571380.1">
    <property type="nucleotide sequence ID" value="NM_131305.1"/>
</dbReference>
<dbReference type="RefSeq" id="XP_005167457.1">
    <property type="nucleotide sequence ID" value="XM_005167400.3"/>
</dbReference>
<dbReference type="SMR" id="Q98875"/>
<dbReference type="FunCoup" id="Q98875">
    <property type="interactions" value="110"/>
</dbReference>
<dbReference type="STRING" id="7955.ENSDARP00000011033"/>
<dbReference type="PaxDb" id="7955-ENSDARP00000011033"/>
<dbReference type="Ensembl" id="ENSDART00000019910">
    <property type="protein sequence ID" value="ENSDARP00000011033"/>
    <property type="gene ID" value="ENSDARG00000013125"/>
</dbReference>
<dbReference type="GeneID" id="30568"/>
<dbReference type="KEGG" id="dre:30568"/>
<dbReference type="AGR" id="ZFIN:ZDB-GENE-990415-48"/>
<dbReference type="CTD" id="30568"/>
<dbReference type="ZFIN" id="ZDB-GENE-990415-48">
    <property type="gene designation" value="dlx1a"/>
</dbReference>
<dbReference type="eggNOG" id="KOG0850">
    <property type="taxonomic scope" value="Eukaryota"/>
</dbReference>
<dbReference type="HOGENOM" id="CLU_074733_2_0_1"/>
<dbReference type="InParanoid" id="Q98875"/>
<dbReference type="OMA" id="GPPVWNT"/>
<dbReference type="OrthoDB" id="6159439at2759"/>
<dbReference type="PhylomeDB" id="Q98875"/>
<dbReference type="TreeFam" id="TF315720"/>
<dbReference type="PRO" id="PR:Q98875"/>
<dbReference type="Proteomes" id="UP000000437">
    <property type="component" value="Chromosome 9"/>
</dbReference>
<dbReference type="Bgee" id="ENSDARG00000013125">
    <property type="expression patterns" value="Expressed in skeleton of lower jaw and 27 other cell types or tissues"/>
</dbReference>
<dbReference type="GO" id="GO:0005634">
    <property type="term" value="C:nucleus"/>
    <property type="evidence" value="ECO:0007669"/>
    <property type="project" value="UniProtKB-SubCell"/>
</dbReference>
<dbReference type="GO" id="GO:0000981">
    <property type="term" value="F:DNA-binding transcription factor activity, RNA polymerase II-specific"/>
    <property type="evidence" value="ECO:0000318"/>
    <property type="project" value="GO_Central"/>
</dbReference>
<dbReference type="GO" id="GO:0000978">
    <property type="term" value="F:RNA polymerase II cis-regulatory region sequence-specific DNA binding"/>
    <property type="evidence" value="ECO:0000318"/>
    <property type="project" value="GO_Central"/>
</dbReference>
<dbReference type="GO" id="GO:0051216">
    <property type="term" value="P:cartilage development"/>
    <property type="evidence" value="ECO:0000316"/>
    <property type="project" value="ZFIN"/>
</dbReference>
<dbReference type="GO" id="GO:0030154">
    <property type="term" value="P:cell differentiation"/>
    <property type="evidence" value="ECO:0000318"/>
    <property type="project" value="GO_Central"/>
</dbReference>
<dbReference type="GO" id="GO:0048706">
    <property type="term" value="P:embryonic skeletal system development"/>
    <property type="evidence" value="ECO:0000318"/>
    <property type="project" value="GO_Central"/>
</dbReference>
<dbReference type="GO" id="GO:0048703">
    <property type="term" value="P:embryonic viscerocranium morphogenesis"/>
    <property type="evidence" value="ECO:0000316"/>
    <property type="project" value="ZFIN"/>
</dbReference>
<dbReference type="GO" id="GO:0046533">
    <property type="term" value="P:negative regulation of photoreceptor cell differentiation"/>
    <property type="evidence" value="ECO:0000250"/>
    <property type="project" value="UniProtKB"/>
</dbReference>
<dbReference type="GO" id="GO:1902871">
    <property type="term" value="P:positive regulation of amacrine cell differentiation"/>
    <property type="evidence" value="ECO:0000250"/>
    <property type="project" value="UniProtKB"/>
</dbReference>
<dbReference type="GO" id="GO:0045597">
    <property type="term" value="P:positive regulation of cell differentiation"/>
    <property type="evidence" value="ECO:0000250"/>
    <property type="project" value="UniProtKB"/>
</dbReference>
<dbReference type="GO" id="GO:0045944">
    <property type="term" value="P:positive regulation of transcription by RNA polymerase II"/>
    <property type="evidence" value="ECO:0000250"/>
    <property type="project" value="UniProtKB"/>
</dbReference>
<dbReference type="GO" id="GO:0006357">
    <property type="term" value="P:regulation of transcription by RNA polymerase II"/>
    <property type="evidence" value="ECO:0000318"/>
    <property type="project" value="GO_Central"/>
</dbReference>
<dbReference type="CDD" id="cd00086">
    <property type="entry name" value="homeodomain"/>
    <property type="match status" value="1"/>
</dbReference>
<dbReference type="FunFam" id="1.10.10.60:FF:000074">
    <property type="entry name" value="Distal-less homeobox 1"/>
    <property type="match status" value="1"/>
</dbReference>
<dbReference type="Gene3D" id="1.10.10.60">
    <property type="entry name" value="Homeodomain-like"/>
    <property type="match status" value="1"/>
</dbReference>
<dbReference type="InterPro" id="IPR050460">
    <property type="entry name" value="Distal-less_Homeobox_TF"/>
</dbReference>
<dbReference type="InterPro" id="IPR001356">
    <property type="entry name" value="HD"/>
</dbReference>
<dbReference type="InterPro" id="IPR020479">
    <property type="entry name" value="HD_metazoa"/>
</dbReference>
<dbReference type="InterPro" id="IPR017970">
    <property type="entry name" value="Homeobox_CS"/>
</dbReference>
<dbReference type="InterPro" id="IPR009057">
    <property type="entry name" value="Homeodomain-like_sf"/>
</dbReference>
<dbReference type="InterPro" id="IPR000047">
    <property type="entry name" value="HTH_motif"/>
</dbReference>
<dbReference type="PANTHER" id="PTHR24327">
    <property type="entry name" value="HOMEOBOX PROTEIN"/>
    <property type="match status" value="1"/>
</dbReference>
<dbReference type="PANTHER" id="PTHR24327:SF33">
    <property type="entry name" value="HOMEOBOX PROTEIN DLX-1"/>
    <property type="match status" value="1"/>
</dbReference>
<dbReference type="Pfam" id="PF00046">
    <property type="entry name" value="Homeodomain"/>
    <property type="match status" value="1"/>
</dbReference>
<dbReference type="PRINTS" id="PR00024">
    <property type="entry name" value="HOMEOBOX"/>
</dbReference>
<dbReference type="PRINTS" id="PR00031">
    <property type="entry name" value="HTHREPRESSR"/>
</dbReference>
<dbReference type="SMART" id="SM00389">
    <property type="entry name" value="HOX"/>
    <property type="match status" value="1"/>
</dbReference>
<dbReference type="SUPFAM" id="SSF46689">
    <property type="entry name" value="Homeodomain-like"/>
    <property type="match status" value="1"/>
</dbReference>
<dbReference type="PROSITE" id="PS00027">
    <property type="entry name" value="HOMEOBOX_1"/>
    <property type="match status" value="1"/>
</dbReference>
<dbReference type="PROSITE" id="PS50071">
    <property type="entry name" value="HOMEOBOX_2"/>
    <property type="match status" value="1"/>
</dbReference>
<keyword id="KW-0217">Developmental protein</keyword>
<keyword id="KW-0238">DNA-binding</keyword>
<keyword id="KW-0371">Homeobox</keyword>
<keyword id="KW-0539">Nucleus</keyword>
<keyword id="KW-1185">Reference proteome</keyword>
<reference key="1">
    <citation type="journal article" date="1996" name="Proc. Natl. Acad. Sci. U.S.A.">
        <title>The evolution of the vertebrate Dlx gene family.</title>
        <authorList>
            <person name="Stock D.W."/>
            <person name="Ellies D.L."/>
            <person name="Zhao Z."/>
            <person name="Ekker M."/>
            <person name="Ruddle F.H."/>
            <person name="Weiss K.M."/>
        </authorList>
    </citation>
    <scope>NUCLEOTIDE SEQUENCE [MRNA]</scope>
    <source>
        <tissue>Larva</tissue>
    </source>
</reference>
<reference key="2">
    <citation type="submission" date="2005-04" db="EMBL/GenBank/DDBJ databases">
        <authorList>
            <consortium name="NIH - Zebrafish Gene Collection (ZGC) project"/>
        </authorList>
    </citation>
    <scope>NUCLEOTIDE SEQUENCE [LARGE SCALE MRNA]</scope>
    <source>
        <tissue>Larva</tissue>
    </source>
</reference>
<evidence type="ECO:0000255" key="1">
    <source>
        <dbReference type="PROSITE-ProRule" id="PRU00108"/>
    </source>
</evidence>
<evidence type="ECO:0000305" key="2"/>
<gene>
    <name type="primary">dlx1a</name>
    <name type="synonym">dlx1</name>
</gene>
<proteinExistence type="evidence at transcript level"/>
<accession>Q98875</accession>
<accession>Q567K7</accession>
<feature type="chain" id="PRO_0000049046" description="Homeobox protein Dlx1a">
    <location>
        <begin position="1"/>
        <end position="252"/>
    </location>
</feature>
<feature type="DNA-binding region" description="Homeobox" evidence="1">
    <location>
        <begin position="128"/>
        <end position="187"/>
    </location>
</feature>
<name>DLX1A_DANRE</name>